<feature type="chain" id="PRO_0000062992" description="Chaperone protein HtpG">
    <location>
        <begin position="1"/>
        <end position="621"/>
    </location>
</feature>
<feature type="region of interest" description="A; substrate-binding" evidence="1">
    <location>
        <begin position="1"/>
        <end position="341"/>
    </location>
</feature>
<feature type="region of interest" description="B" evidence="1">
    <location>
        <begin position="342"/>
        <end position="547"/>
    </location>
</feature>
<feature type="region of interest" description="C" evidence="1">
    <location>
        <begin position="548"/>
        <end position="621"/>
    </location>
</feature>
<organism>
    <name type="scientific">Helicobacter pylori (strain ATCC 700392 / 26695)</name>
    <name type="common">Campylobacter pylori</name>
    <dbReference type="NCBI Taxonomy" id="85962"/>
    <lineage>
        <taxon>Bacteria</taxon>
        <taxon>Pseudomonadati</taxon>
        <taxon>Campylobacterota</taxon>
        <taxon>Epsilonproteobacteria</taxon>
        <taxon>Campylobacterales</taxon>
        <taxon>Helicobacteraceae</taxon>
        <taxon>Helicobacter</taxon>
    </lineage>
</organism>
<protein>
    <recommendedName>
        <fullName evidence="1">Chaperone protein HtpG</fullName>
    </recommendedName>
    <alternativeName>
        <fullName evidence="1">Heat shock protein HtpG</fullName>
    </alternativeName>
    <alternativeName>
        <fullName evidence="1">High temperature protein G</fullName>
    </alternativeName>
</protein>
<accession>P56116</accession>
<reference key="1">
    <citation type="journal article" date="1997" name="Nature">
        <title>The complete genome sequence of the gastric pathogen Helicobacter pylori.</title>
        <authorList>
            <person name="Tomb J.-F."/>
            <person name="White O."/>
            <person name="Kerlavage A.R."/>
            <person name="Clayton R.A."/>
            <person name="Sutton G.G."/>
            <person name="Fleischmann R.D."/>
            <person name="Ketchum K.A."/>
            <person name="Klenk H.-P."/>
            <person name="Gill S.R."/>
            <person name="Dougherty B.A."/>
            <person name="Nelson K.E."/>
            <person name="Quackenbush J."/>
            <person name="Zhou L."/>
            <person name="Kirkness E.F."/>
            <person name="Peterson S.N."/>
            <person name="Loftus B.J."/>
            <person name="Richardson D.L."/>
            <person name="Dodson R.J."/>
            <person name="Khalak H.G."/>
            <person name="Glodek A."/>
            <person name="McKenney K."/>
            <person name="FitzGerald L.M."/>
            <person name="Lee N."/>
            <person name="Adams M.D."/>
            <person name="Hickey E.K."/>
            <person name="Berg D.E."/>
            <person name="Gocayne J.D."/>
            <person name="Utterback T.R."/>
            <person name="Peterson J.D."/>
            <person name="Kelley J.M."/>
            <person name="Cotton M.D."/>
            <person name="Weidman J.F."/>
            <person name="Fujii C."/>
            <person name="Bowman C."/>
            <person name="Watthey L."/>
            <person name="Wallin E."/>
            <person name="Hayes W.S."/>
            <person name="Borodovsky M."/>
            <person name="Karp P.D."/>
            <person name="Smith H.O."/>
            <person name="Fraser C.M."/>
            <person name="Venter J.C."/>
        </authorList>
    </citation>
    <scope>NUCLEOTIDE SEQUENCE [LARGE SCALE GENOMIC DNA]</scope>
    <source>
        <strain>ATCC 700392 / 26695</strain>
    </source>
</reference>
<comment type="function">
    <text evidence="1">Molecular chaperone. Has ATPase activity.</text>
</comment>
<comment type="subunit">
    <text evidence="1">Homodimer.</text>
</comment>
<comment type="subcellular location">
    <subcellularLocation>
        <location evidence="1">Cytoplasm</location>
    </subcellularLocation>
</comment>
<comment type="similarity">
    <text evidence="1">Belongs to the heat shock protein 90 family.</text>
</comment>
<keyword id="KW-0067">ATP-binding</keyword>
<keyword id="KW-0143">Chaperone</keyword>
<keyword id="KW-0963">Cytoplasm</keyword>
<keyword id="KW-0547">Nucleotide-binding</keyword>
<keyword id="KW-1185">Reference proteome</keyword>
<keyword id="KW-0346">Stress response</keyword>
<proteinExistence type="inferred from homology"/>
<dbReference type="EMBL" id="AE000511">
    <property type="protein sequence ID" value="AAD07278.1"/>
    <property type="molecule type" value="Genomic_DNA"/>
</dbReference>
<dbReference type="PIR" id="B64546">
    <property type="entry name" value="B64546"/>
</dbReference>
<dbReference type="RefSeq" id="NP_207008.1">
    <property type="nucleotide sequence ID" value="NC_000915.1"/>
</dbReference>
<dbReference type="RefSeq" id="WP_000070607.1">
    <property type="nucleotide sequence ID" value="NC_018939.1"/>
</dbReference>
<dbReference type="SMR" id="P56116"/>
<dbReference type="FunCoup" id="P56116">
    <property type="interactions" value="300"/>
</dbReference>
<dbReference type="IntAct" id="P56116">
    <property type="interactions" value="1"/>
</dbReference>
<dbReference type="MINT" id="P56116"/>
<dbReference type="STRING" id="85962.HP_0210"/>
<dbReference type="PaxDb" id="85962-C694_01055"/>
<dbReference type="EnsemblBacteria" id="AAD07278">
    <property type="protein sequence ID" value="AAD07278"/>
    <property type="gene ID" value="HP_0210"/>
</dbReference>
<dbReference type="KEGG" id="heo:C694_01055"/>
<dbReference type="KEGG" id="hpy:HP_0210"/>
<dbReference type="PATRIC" id="fig|85962.47.peg.227"/>
<dbReference type="eggNOG" id="COG0326">
    <property type="taxonomic scope" value="Bacteria"/>
</dbReference>
<dbReference type="InParanoid" id="P56116"/>
<dbReference type="OrthoDB" id="9802640at2"/>
<dbReference type="PhylomeDB" id="P56116"/>
<dbReference type="Proteomes" id="UP000000429">
    <property type="component" value="Chromosome"/>
</dbReference>
<dbReference type="GO" id="GO:0005829">
    <property type="term" value="C:cytosol"/>
    <property type="evidence" value="ECO:0000318"/>
    <property type="project" value="GO_Central"/>
</dbReference>
<dbReference type="GO" id="GO:0005524">
    <property type="term" value="F:ATP binding"/>
    <property type="evidence" value="ECO:0000318"/>
    <property type="project" value="GO_Central"/>
</dbReference>
<dbReference type="GO" id="GO:0016887">
    <property type="term" value="F:ATP hydrolysis activity"/>
    <property type="evidence" value="ECO:0000318"/>
    <property type="project" value="GO_Central"/>
</dbReference>
<dbReference type="GO" id="GO:0140662">
    <property type="term" value="F:ATP-dependent protein folding chaperone"/>
    <property type="evidence" value="ECO:0007669"/>
    <property type="project" value="InterPro"/>
</dbReference>
<dbReference type="GO" id="GO:0051082">
    <property type="term" value="F:unfolded protein binding"/>
    <property type="evidence" value="ECO:0000318"/>
    <property type="project" value="GO_Central"/>
</dbReference>
<dbReference type="GO" id="GO:0006974">
    <property type="term" value="P:DNA damage response"/>
    <property type="evidence" value="ECO:0000318"/>
    <property type="project" value="GO_Central"/>
</dbReference>
<dbReference type="GO" id="GO:0006457">
    <property type="term" value="P:protein folding"/>
    <property type="evidence" value="ECO:0000318"/>
    <property type="project" value="GO_Central"/>
</dbReference>
<dbReference type="GO" id="GO:0009408">
    <property type="term" value="P:response to heat"/>
    <property type="evidence" value="ECO:0000318"/>
    <property type="project" value="GO_Central"/>
</dbReference>
<dbReference type="CDD" id="cd16927">
    <property type="entry name" value="HATPase_Hsp90-like"/>
    <property type="match status" value="1"/>
</dbReference>
<dbReference type="FunFam" id="1.20.120.790:FF:000016">
    <property type="entry name" value="Chaperone protein HtpG"/>
    <property type="match status" value="1"/>
</dbReference>
<dbReference type="FunFam" id="3.30.230.80:FF:000002">
    <property type="entry name" value="Molecular chaperone HtpG"/>
    <property type="match status" value="1"/>
</dbReference>
<dbReference type="FunFam" id="3.30.565.10:FF:000009">
    <property type="entry name" value="Molecular chaperone HtpG"/>
    <property type="match status" value="1"/>
</dbReference>
<dbReference type="Gene3D" id="3.30.230.80">
    <property type="match status" value="1"/>
</dbReference>
<dbReference type="Gene3D" id="3.40.50.11260">
    <property type="match status" value="1"/>
</dbReference>
<dbReference type="Gene3D" id="1.20.120.790">
    <property type="entry name" value="Heat shock protein 90, C-terminal domain"/>
    <property type="match status" value="1"/>
</dbReference>
<dbReference type="Gene3D" id="3.30.565.10">
    <property type="entry name" value="Histidine kinase-like ATPase, C-terminal domain"/>
    <property type="match status" value="1"/>
</dbReference>
<dbReference type="HAMAP" id="MF_00505">
    <property type="entry name" value="HSP90"/>
    <property type="match status" value="1"/>
</dbReference>
<dbReference type="InterPro" id="IPR036890">
    <property type="entry name" value="HATPase_C_sf"/>
</dbReference>
<dbReference type="InterPro" id="IPR019805">
    <property type="entry name" value="Heat_shock_protein_90_CS"/>
</dbReference>
<dbReference type="InterPro" id="IPR037196">
    <property type="entry name" value="HSP90_C"/>
</dbReference>
<dbReference type="InterPro" id="IPR001404">
    <property type="entry name" value="Hsp90_fam"/>
</dbReference>
<dbReference type="InterPro" id="IPR020575">
    <property type="entry name" value="Hsp90_N"/>
</dbReference>
<dbReference type="InterPro" id="IPR020568">
    <property type="entry name" value="Ribosomal_Su5_D2-typ_SF"/>
</dbReference>
<dbReference type="NCBIfam" id="NF003555">
    <property type="entry name" value="PRK05218.1"/>
    <property type="match status" value="1"/>
</dbReference>
<dbReference type="PANTHER" id="PTHR11528">
    <property type="entry name" value="HEAT SHOCK PROTEIN 90 FAMILY MEMBER"/>
    <property type="match status" value="1"/>
</dbReference>
<dbReference type="Pfam" id="PF13589">
    <property type="entry name" value="HATPase_c_3"/>
    <property type="match status" value="1"/>
</dbReference>
<dbReference type="Pfam" id="PF00183">
    <property type="entry name" value="HSP90"/>
    <property type="match status" value="1"/>
</dbReference>
<dbReference type="PIRSF" id="PIRSF002583">
    <property type="entry name" value="Hsp90"/>
    <property type="match status" value="1"/>
</dbReference>
<dbReference type="PRINTS" id="PR00775">
    <property type="entry name" value="HEATSHOCK90"/>
</dbReference>
<dbReference type="SMART" id="SM00387">
    <property type="entry name" value="HATPase_c"/>
    <property type="match status" value="1"/>
</dbReference>
<dbReference type="SUPFAM" id="SSF55874">
    <property type="entry name" value="ATPase domain of HSP90 chaperone/DNA topoisomerase II/histidine kinase"/>
    <property type="match status" value="1"/>
</dbReference>
<dbReference type="SUPFAM" id="SSF110942">
    <property type="entry name" value="HSP90 C-terminal domain"/>
    <property type="match status" value="1"/>
</dbReference>
<dbReference type="SUPFAM" id="SSF54211">
    <property type="entry name" value="Ribosomal protein S5 domain 2-like"/>
    <property type="match status" value="1"/>
</dbReference>
<dbReference type="PROSITE" id="PS00298">
    <property type="entry name" value="HSP90"/>
    <property type="match status" value="1"/>
</dbReference>
<name>HTPG_HELPY</name>
<gene>
    <name evidence="1" type="primary">htpG</name>
    <name type="ordered locus">HP_0210</name>
</gene>
<sequence length="621" mass="71274">MSNQEYTFQTEINQLLDLMIHSLYSNKEIFLRELVSNASDALDKLNYLMLTDEKLKGLNTTPSIHLSFDSQKKTLTIKDNGIGMDKNDLIEHLGTIAKSGTKNFLSALSGDKKKDSALIGQFGVGFYSAFMVASKIVVQTKKVNSDQAYAWVSDGKGKFEISECVKDEQGTEITLFLKDEDSHFASRWEIDSVVKKYSEHIPFPIFLTYTDTKHEGEGDNQKEIKEEKCEQINQASALWKMNKSELKDKDYKEFYQSFAHDNSEPLSYIHNKVEGSLEYTTLFYIPSTAPFDMFRVDYKSGVKLYVKRVFITDDDKELLPSYLRFVKGVIDSEDLPLNVSREILQQNKILANIRSASVKKILSEIERLSKDEKNYHKFYEPFGKVLKEGLYGDFENKEKLLELLRFYSKDKEKLISLKEYKENLKENQKSIYYLLGENLDLLKASPLLEKYAQKGYDVLLLSDEIDAFVMPGVNEYDKTPFKDASHSESLKELGLEEIHDEVKDQFKDLMKAFEENLKDEIKGVELSSHLTSAVALIGDEQNAMMANWMRQMGQSVPESKKTLELNPNHAILQKLLKCEDKEQLSAFIWLLYDGAKLLEKGALKDAKSFNERLNSVLLKAL</sequence>
<evidence type="ECO:0000255" key="1">
    <source>
        <dbReference type="HAMAP-Rule" id="MF_00505"/>
    </source>
</evidence>